<proteinExistence type="evidence at protein level"/>
<organism>
    <name type="scientific">Archaeoglobus fulgidus (strain ATCC 49558 / DSM 4304 / JCM 9628 / NBRC 100126 / VC-16)</name>
    <dbReference type="NCBI Taxonomy" id="224325"/>
    <lineage>
        <taxon>Archaea</taxon>
        <taxon>Methanobacteriati</taxon>
        <taxon>Methanobacteriota</taxon>
        <taxon>Archaeoglobi</taxon>
        <taxon>Archaeoglobales</taxon>
        <taxon>Archaeoglobaceae</taxon>
        <taxon>Archaeoglobus</taxon>
    </lineage>
</organism>
<reference key="1">
    <citation type="journal article" date="1997" name="Nature">
        <title>The complete genome sequence of the hyperthermophilic, sulphate-reducing archaeon Archaeoglobus fulgidus.</title>
        <authorList>
            <person name="Klenk H.-P."/>
            <person name="Clayton R.A."/>
            <person name="Tomb J.-F."/>
            <person name="White O."/>
            <person name="Nelson K.E."/>
            <person name="Ketchum K.A."/>
            <person name="Dodson R.J."/>
            <person name="Gwinn M.L."/>
            <person name="Hickey E.K."/>
            <person name="Peterson J.D."/>
            <person name="Richardson D.L."/>
            <person name="Kerlavage A.R."/>
            <person name="Graham D.E."/>
            <person name="Kyrpides N.C."/>
            <person name="Fleischmann R.D."/>
            <person name="Quackenbush J."/>
            <person name="Lee N.H."/>
            <person name="Sutton G.G."/>
            <person name="Gill S.R."/>
            <person name="Kirkness E.F."/>
            <person name="Dougherty B.A."/>
            <person name="McKenney K."/>
            <person name="Adams M.D."/>
            <person name="Loftus B.J."/>
            <person name="Peterson S.N."/>
            <person name="Reich C.I."/>
            <person name="McNeil L.K."/>
            <person name="Badger J.H."/>
            <person name="Glodek A."/>
            <person name="Zhou L."/>
            <person name="Overbeek R."/>
            <person name="Gocayne J.D."/>
            <person name="Weidman J.F."/>
            <person name="McDonald L.A."/>
            <person name="Utterback T.R."/>
            <person name="Cotton M.D."/>
            <person name="Spriggs T."/>
            <person name="Artiach P."/>
            <person name="Kaine B.P."/>
            <person name="Sykes S.M."/>
            <person name="Sadow P.W."/>
            <person name="D'Andrea K.P."/>
            <person name="Bowman C."/>
            <person name="Fujii C."/>
            <person name="Garland S.A."/>
            <person name="Mason T.M."/>
            <person name="Olsen G.J."/>
            <person name="Fraser C.M."/>
            <person name="Smith H.O."/>
            <person name="Woese C.R."/>
            <person name="Venter J.C."/>
        </authorList>
    </citation>
    <scope>NUCLEOTIDE SEQUENCE [LARGE SCALE GENOMIC DNA]</scope>
    <source>
        <strain>ATCC 49558 / DSM 4304 / JCM 9628 / NBRC 100126 / VC-16</strain>
    </source>
</reference>
<reference key="2">
    <citation type="journal article" date="2000" name="Nucleic Acids Res.">
        <title>Assembly of archaeal signal recognition particle from recombinant components.</title>
        <authorList>
            <person name="Bhuiyan S.H."/>
            <person name="Gowda K."/>
            <person name="Hotokezaka H."/>
            <person name="Zwieb C."/>
        </authorList>
    </citation>
    <scope>FUNCTION</scope>
    <scope>SUBUNIT</scope>
    <scope>SUBCELLULAR LOCATION</scope>
</reference>
<reference key="3">
    <citation type="journal article" date="2000" name="Biochemistry">
        <title>Role of SRP19 in assembly of the Archaeoglobus fulgidus signal recognition particle.</title>
        <authorList>
            <person name="Diener J.L."/>
            <person name="Wilson C."/>
        </authorList>
    </citation>
    <scope>FUNCTION</scope>
    <scope>SUBUNIT</scope>
    <scope>SUBCELLULAR LOCATION</scope>
</reference>
<reference key="4">
    <citation type="journal article" date="2002" name="J. Mol. Biol.">
        <title>Solution structure of protein SRP19 of Archaeoglobus fulgidus signal recognition particle.</title>
        <authorList>
            <person name="Pakhomova O.N."/>
            <person name="Deep S."/>
            <person name="Huang Q."/>
            <person name="Zwieb C."/>
            <person name="Hinck A.P."/>
        </authorList>
    </citation>
    <scope>STRUCTURE BY NMR</scope>
</reference>
<name>SRP19_ARCFU</name>
<feature type="chain" id="PRO_0000135214" description="Signal recognition particle 19 kDa protein">
    <location>
        <begin position="1"/>
        <end position="104"/>
    </location>
</feature>
<feature type="strand" evidence="4">
    <location>
        <begin position="4"/>
        <end position="7"/>
    </location>
</feature>
<feature type="turn" evidence="4">
    <location>
        <begin position="8"/>
        <end position="11"/>
    </location>
</feature>
<feature type="strand" evidence="4">
    <location>
        <begin position="13"/>
        <end position="15"/>
    </location>
</feature>
<feature type="turn" evidence="4">
    <location>
        <begin position="17"/>
        <end position="20"/>
    </location>
</feature>
<feature type="helix" evidence="4">
    <location>
        <begin position="25"/>
        <end position="27"/>
    </location>
</feature>
<feature type="helix" evidence="4">
    <location>
        <begin position="34"/>
        <end position="44"/>
    </location>
</feature>
<feature type="strand" evidence="4">
    <location>
        <begin position="45"/>
        <end position="50"/>
    </location>
</feature>
<feature type="turn" evidence="4">
    <location>
        <begin position="54"/>
        <end position="56"/>
    </location>
</feature>
<feature type="strand" evidence="4">
    <location>
        <begin position="65"/>
        <end position="69"/>
    </location>
</feature>
<feature type="helix" evidence="4">
    <location>
        <begin position="75"/>
        <end position="94"/>
    </location>
</feature>
<feature type="helix" evidence="4">
    <location>
        <begin position="97"/>
        <end position="100"/>
    </location>
</feature>
<sequence length="104" mass="12405">MKECVVWTVNLDSKKSRAEGRRIPRRFAVPNVKLHELVEACKELGLKFRAEEKKYPKSWWEEGGRVVVEKRGTKTKLMIELARKIAEIREQKREQKKDKKKKKK</sequence>
<evidence type="ECO:0000255" key="1">
    <source>
        <dbReference type="HAMAP-Rule" id="MF_00305"/>
    </source>
</evidence>
<evidence type="ECO:0000269" key="2">
    <source>
    </source>
</evidence>
<evidence type="ECO:0000269" key="3">
    <source>
    </source>
</evidence>
<evidence type="ECO:0007829" key="4">
    <source>
        <dbReference type="PDB" id="1KVN"/>
    </source>
</evidence>
<dbReference type="EMBL" id="AE000782">
    <property type="protein sequence ID" value="AAB89988.1"/>
    <property type="molecule type" value="Genomic_DNA"/>
</dbReference>
<dbReference type="PIR" id="A69407">
    <property type="entry name" value="A69407"/>
</dbReference>
<dbReference type="RefSeq" id="WP_010878753.1">
    <property type="nucleotide sequence ID" value="NC_000917.1"/>
</dbReference>
<dbReference type="PDB" id="1KVN">
    <property type="method" value="NMR"/>
    <property type="chains" value="A=1-104"/>
</dbReference>
<dbReference type="PDB" id="1KVV">
    <property type="method" value="NMR"/>
    <property type="chains" value="A=1-104"/>
</dbReference>
<dbReference type="PDBsum" id="1KVN"/>
<dbReference type="PDBsum" id="1KVV"/>
<dbReference type="BMRB" id="O29010"/>
<dbReference type="SMR" id="O29010"/>
<dbReference type="STRING" id="224325.AF_1258"/>
<dbReference type="PaxDb" id="224325-AF_1258"/>
<dbReference type="EnsemblBacteria" id="AAB89988">
    <property type="protein sequence ID" value="AAB89988"/>
    <property type="gene ID" value="AF_1258"/>
</dbReference>
<dbReference type="GeneID" id="24794861"/>
<dbReference type="KEGG" id="afu:AF_1258"/>
<dbReference type="eggNOG" id="arCOG01217">
    <property type="taxonomic scope" value="Archaea"/>
</dbReference>
<dbReference type="HOGENOM" id="CLU_169299_1_0_2"/>
<dbReference type="OrthoDB" id="56356at2157"/>
<dbReference type="PhylomeDB" id="O29010"/>
<dbReference type="EvolutionaryTrace" id="O29010"/>
<dbReference type="Proteomes" id="UP000002199">
    <property type="component" value="Chromosome"/>
</dbReference>
<dbReference type="GO" id="GO:0048500">
    <property type="term" value="C:signal recognition particle"/>
    <property type="evidence" value="ECO:0007669"/>
    <property type="project" value="UniProtKB-UniRule"/>
</dbReference>
<dbReference type="GO" id="GO:0008312">
    <property type="term" value="F:7S RNA binding"/>
    <property type="evidence" value="ECO:0007669"/>
    <property type="project" value="UniProtKB-UniRule"/>
</dbReference>
<dbReference type="GO" id="GO:0006617">
    <property type="term" value="P:SRP-dependent cotranslational protein targeting to membrane, signal sequence recognition"/>
    <property type="evidence" value="ECO:0007669"/>
    <property type="project" value="TreeGrafter"/>
</dbReference>
<dbReference type="Gene3D" id="3.30.56.30">
    <property type="entry name" value="Signal recognition particle, SRP19-like subunit"/>
    <property type="match status" value="1"/>
</dbReference>
<dbReference type="HAMAP" id="MF_00305">
    <property type="entry name" value="SRP19"/>
    <property type="match status" value="1"/>
</dbReference>
<dbReference type="InterPro" id="IPR002778">
    <property type="entry name" value="Signal_recog_particle_SRP19"/>
</dbReference>
<dbReference type="InterPro" id="IPR036521">
    <property type="entry name" value="SRP19-like_sf"/>
</dbReference>
<dbReference type="InterPro" id="IPR022938">
    <property type="entry name" value="SRP19_arc-type"/>
</dbReference>
<dbReference type="PANTHER" id="PTHR17453">
    <property type="entry name" value="SIGNAL RECOGNITION PARTICLE 19 KD PROTEIN"/>
    <property type="match status" value="1"/>
</dbReference>
<dbReference type="PANTHER" id="PTHR17453:SF0">
    <property type="entry name" value="SIGNAL RECOGNITION PARTICLE 19 KDA PROTEIN"/>
    <property type="match status" value="1"/>
</dbReference>
<dbReference type="Pfam" id="PF01922">
    <property type="entry name" value="SRP19"/>
    <property type="match status" value="1"/>
</dbReference>
<dbReference type="SUPFAM" id="SSF69695">
    <property type="entry name" value="SRP19"/>
    <property type="match status" value="1"/>
</dbReference>
<protein>
    <recommendedName>
        <fullName evidence="1">Signal recognition particle 19 kDa protein</fullName>
        <shortName evidence="1">SRP19</shortName>
    </recommendedName>
</protein>
<keyword id="KW-0002">3D-structure</keyword>
<keyword id="KW-0963">Cytoplasm</keyword>
<keyword id="KW-1185">Reference proteome</keyword>
<keyword id="KW-0687">Ribonucleoprotein</keyword>
<keyword id="KW-0694">RNA-binding</keyword>
<keyword id="KW-0733">Signal recognition particle</keyword>
<comment type="function">
    <text evidence="1 2 3">Involved in targeting and insertion of nascent membrane proteins into the cytoplasmic membrane. Binds directly to 7S RNA and mediates binding of the 54 kDa subunit of the SRP.</text>
</comment>
<comment type="subunit">
    <text evidence="1 2 3">Part of the signal recognition particle protein translocation system, which is composed of SRP and FtsY. Archaeal SRP consists of a 7S RNA molecule of 300 nucleotides and two protein subunits: SRP54 and SRP19.</text>
</comment>
<comment type="subcellular location">
    <subcellularLocation>
        <location evidence="1 2 3">Cytoplasm</location>
    </subcellularLocation>
</comment>
<comment type="similarity">
    <text evidence="1">Belongs to the SRP19 family.</text>
</comment>
<accession>O29010</accession>
<gene>
    <name evidence="1" type="primary">srp19</name>
    <name type="ordered locus">AF_1258</name>
</gene>